<gene>
    <name evidence="1" type="primary">rpsC</name>
    <name type="ordered locus">Acid_5112</name>
</gene>
<accession>Q01W98</accession>
<feature type="chain" id="PRO_0000293889" description="Small ribosomal subunit protein uS3">
    <location>
        <begin position="1"/>
        <end position="344"/>
    </location>
</feature>
<feature type="domain" description="KH type-2" evidence="1">
    <location>
        <begin position="38"/>
        <end position="106"/>
    </location>
</feature>
<feature type="region of interest" description="Disordered" evidence="2">
    <location>
        <begin position="217"/>
        <end position="344"/>
    </location>
</feature>
<feature type="compositionally biased region" description="Basic and acidic residues" evidence="2">
    <location>
        <begin position="219"/>
        <end position="259"/>
    </location>
</feature>
<feature type="compositionally biased region" description="Basic and acidic residues" evidence="2">
    <location>
        <begin position="335"/>
        <end position="344"/>
    </location>
</feature>
<dbReference type="EMBL" id="CP000473">
    <property type="protein sequence ID" value="ABJ86067.1"/>
    <property type="molecule type" value="Genomic_DNA"/>
</dbReference>
<dbReference type="SMR" id="Q01W98"/>
<dbReference type="FunCoup" id="Q01W98">
    <property type="interactions" value="803"/>
</dbReference>
<dbReference type="STRING" id="234267.Acid_5112"/>
<dbReference type="KEGG" id="sus:Acid_5112"/>
<dbReference type="eggNOG" id="COG0092">
    <property type="taxonomic scope" value="Bacteria"/>
</dbReference>
<dbReference type="HOGENOM" id="CLU_058591_0_0_0"/>
<dbReference type="InParanoid" id="Q01W98"/>
<dbReference type="OrthoDB" id="9806396at2"/>
<dbReference type="GO" id="GO:0022627">
    <property type="term" value="C:cytosolic small ribosomal subunit"/>
    <property type="evidence" value="ECO:0007669"/>
    <property type="project" value="TreeGrafter"/>
</dbReference>
<dbReference type="GO" id="GO:0003729">
    <property type="term" value="F:mRNA binding"/>
    <property type="evidence" value="ECO:0007669"/>
    <property type="project" value="UniProtKB-UniRule"/>
</dbReference>
<dbReference type="GO" id="GO:0019843">
    <property type="term" value="F:rRNA binding"/>
    <property type="evidence" value="ECO:0007669"/>
    <property type="project" value="UniProtKB-UniRule"/>
</dbReference>
<dbReference type="GO" id="GO:0003735">
    <property type="term" value="F:structural constituent of ribosome"/>
    <property type="evidence" value="ECO:0007669"/>
    <property type="project" value="InterPro"/>
</dbReference>
<dbReference type="GO" id="GO:0006412">
    <property type="term" value="P:translation"/>
    <property type="evidence" value="ECO:0007669"/>
    <property type="project" value="UniProtKB-UniRule"/>
</dbReference>
<dbReference type="CDD" id="cd02412">
    <property type="entry name" value="KH-II_30S_S3"/>
    <property type="match status" value="1"/>
</dbReference>
<dbReference type="FunFam" id="3.30.1140.32:FF:000002">
    <property type="entry name" value="30S ribosomal protein S3"/>
    <property type="match status" value="1"/>
</dbReference>
<dbReference type="FunFam" id="3.30.300.20:FF:000001">
    <property type="entry name" value="30S ribosomal protein S3"/>
    <property type="match status" value="1"/>
</dbReference>
<dbReference type="Gene3D" id="3.30.300.20">
    <property type="match status" value="1"/>
</dbReference>
<dbReference type="Gene3D" id="3.30.1140.32">
    <property type="entry name" value="Ribosomal protein S3, C-terminal domain"/>
    <property type="match status" value="1"/>
</dbReference>
<dbReference type="HAMAP" id="MF_01309_B">
    <property type="entry name" value="Ribosomal_uS3_B"/>
    <property type="match status" value="1"/>
</dbReference>
<dbReference type="InterPro" id="IPR004087">
    <property type="entry name" value="KH_dom"/>
</dbReference>
<dbReference type="InterPro" id="IPR015946">
    <property type="entry name" value="KH_dom-like_a/b"/>
</dbReference>
<dbReference type="InterPro" id="IPR004044">
    <property type="entry name" value="KH_dom_type_2"/>
</dbReference>
<dbReference type="InterPro" id="IPR009019">
    <property type="entry name" value="KH_sf_prok-type"/>
</dbReference>
<dbReference type="InterPro" id="IPR036419">
    <property type="entry name" value="Ribosomal_S3_C_sf"/>
</dbReference>
<dbReference type="InterPro" id="IPR005704">
    <property type="entry name" value="Ribosomal_uS3_bac-typ"/>
</dbReference>
<dbReference type="InterPro" id="IPR001351">
    <property type="entry name" value="Ribosomal_uS3_C"/>
</dbReference>
<dbReference type="InterPro" id="IPR018280">
    <property type="entry name" value="Ribosomal_uS3_CS"/>
</dbReference>
<dbReference type="NCBIfam" id="TIGR01009">
    <property type="entry name" value="rpsC_bact"/>
    <property type="match status" value="1"/>
</dbReference>
<dbReference type="PANTHER" id="PTHR11760">
    <property type="entry name" value="30S/40S RIBOSOMAL PROTEIN S3"/>
    <property type="match status" value="1"/>
</dbReference>
<dbReference type="PANTHER" id="PTHR11760:SF19">
    <property type="entry name" value="SMALL RIBOSOMAL SUBUNIT PROTEIN US3C"/>
    <property type="match status" value="1"/>
</dbReference>
<dbReference type="Pfam" id="PF07650">
    <property type="entry name" value="KH_2"/>
    <property type="match status" value="1"/>
</dbReference>
<dbReference type="Pfam" id="PF00189">
    <property type="entry name" value="Ribosomal_S3_C"/>
    <property type="match status" value="1"/>
</dbReference>
<dbReference type="SMART" id="SM00322">
    <property type="entry name" value="KH"/>
    <property type="match status" value="1"/>
</dbReference>
<dbReference type="SUPFAM" id="SSF54814">
    <property type="entry name" value="Prokaryotic type KH domain (KH-domain type II)"/>
    <property type="match status" value="1"/>
</dbReference>
<dbReference type="SUPFAM" id="SSF54821">
    <property type="entry name" value="Ribosomal protein S3 C-terminal domain"/>
    <property type="match status" value="1"/>
</dbReference>
<dbReference type="PROSITE" id="PS50823">
    <property type="entry name" value="KH_TYPE_2"/>
    <property type="match status" value="1"/>
</dbReference>
<dbReference type="PROSITE" id="PS00548">
    <property type="entry name" value="RIBOSOMAL_S3"/>
    <property type="match status" value="1"/>
</dbReference>
<name>RS3_SOLUE</name>
<proteinExistence type="inferred from homology"/>
<organism>
    <name type="scientific">Solibacter usitatus (strain Ellin6076)</name>
    <dbReference type="NCBI Taxonomy" id="234267"/>
    <lineage>
        <taxon>Bacteria</taxon>
        <taxon>Pseudomonadati</taxon>
        <taxon>Acidobacteriota</taxon>
        <taxon>Terriglobia</taxon>
        <taxon>Bryobacterales</taxon>
        <taxon>Solibacteraceae</taxon>
        <taxon>Candidatus Solibacter</taxon>
    </lineage>
</organism>
<sequence length="344" mass="38470">MGQKVHPYGFRLGFNKPWRSRWFAKQGYAKLLQEDLELKAALRERLKSAGVSSIEVDRPGNKLRVTIRTSRPGIIIGRKGAEIEKLKQDMAKKTKREVFIDIQEVHKPELDAQLVSESIALQLEKRVAFRRAMRKAVDSALRFGCKGIKVRVSGRLNGAEIARSEWYLQGQLPLHTLRADIDYGFAEAHTTYGVIGIKAWLYKGEILDLTKRRNLLPEPEPRREQRRDRPDRRDRDGRGGDRDRGGDRGGYRGGDRGDRPPVQSAPPVEATGPAVQTPPSDLPRPAARPVAPILPPLMAPQQPSWKQEVRQDTPSAEGAPEAKPAADENNPGTEQKPEGSGENQ</sequence>
<evidence type="ECO:0000255" key="1">
    <source>
        <dbReference type="HAMAP-Rule" id="MF_01309"/>
    </source>
</evidence>
<evidence type="ECO:0000256" key="2">
    <source>
        <dbReference type="SAM" id="MobiDB-lite"/>
    </source>
</evidence>
<evidence type="ECO:0000305" key="3"/>
<comment type="function">
    <text evidence="1">Binds the lower part of the 30S subunit head. Binds mRNA in the 70S ribosome, positioning it for translation.</text>
</comment>
<comment type="subunit">
    <text evidence="1">Part of the 30S ribosomal subunit. Forms a tight complex with proteins S10 and S14.</text>
</comment>
<comment type="similarity">
    <text evidence="1">Belongs to the universal ribosomal protein uS3 family.</text>
</comment>
<keyword id="KW-0687">Ribonucleoprotein</keyword>
<keyword id="KW-0689">Ribosomal protein</keyword>
<keyword id="KW-0694">RNA-binding</keyword>
<keyword id="KW-0699">rRNA-binding</keyword>
<reference key="1">
    <citation type="journal article" date="2009" name="Appl. Environ. Microbiol.">
        <title>Three genomes from the phylum Acidobacteria provide insight into the lifestyles of these microorganisms in soils.</title>
        <authorList>
            <person name="Ward N.L."/>
            <person name="Challacombe J.F."/>
            <person name="Janssen P.H."/>
            <person name="Henrissat B."/>
            <person name="Coutinho P.M."/>
            <person name="Wu M."/>
            <person name="Xie G."/>
            <person name="Haft D.H."/>
            <person name="Sait M."/>
            <person name="Badger J."/>
            <person name="Barabote R.D."/>
            <person name="Bradley B."/>
            <person name="Brettin T.S."/>
            <person name="Brinkac L.M."/>
            <person name="Bruce D."/>
            <person name="Creasy T."/>
            <person name="Daugherty S.C."/>
            <person name="Davidsen T.M."/>
            <person name="DeBoy R.T."/>
            <person name="Detter J.C."/>
            <person name="Dodson R.J."/>
            <person name="Durkin A.S."/>
            <person name="Ganapathy A."/>
            <person name="Gwinn-Giglio M."/>
            <person name="Han C.S."/>
            <person name="Khouri H."/>
            <person name="Kiss H."/>
            <person name="Kothari S.P."/>
            <person name="Madupu R."/>
            <person name="Nelson K.E."/>
            <person name="Nelson W.C."/>
            <person name="Paulsen I."/>
            <person name="Penn K."/>
            <person name="Ren Q."/>
            <person name="Rosovitz M.J."/>
            <person name="Selengut J.D."/>
            <person name="Shrivastava S."/>
            <person name="Sullivan S.A."/>
            <person name="Tapia R."/>
            <person name="Thompson L.S."/>
            <person name="Watkins K.L."/>
            <person name="Yang Q."/>
            <person name="Yu C."/>
            <person name="Zafar N."/>
            <person name="Zhou L."/>
            <person name="Kuske C.R."/>
        </authorList>
    </citation>
    <scope>NUCLEOTIDE SEQUENCE [LARGE SCALE GENOMIC DNA]</scope>
    <source>
        <strain>Ellin6076</strain>
    </source>
</reference>
<protein>
    <recommendedName>
        <fullName evidence="1">Small ribosomal subunit protein uS3</fullName>
    </recommendedName>
    <alternativeName>
        <fullName evidence="3">30S ribosomal protein S3</fullName>
    </alternativeName>
</protein>